<reference key="1">
    <citation type="journal article" date="2003" name="Lancet">
        <title>Genome sequence of Vibrio parahaemolyticus: a pathogenic mechanism distinct from that of V. cholerae.</title>
        <authorList>
            <person name="Makino K."/>
            <person name="Oshima K."/>
            <person name="Kurokawa K."/>
            <person name="Yokoyama K."/>
            <person name="Uda T."/>
            <person name="Tagomori K."/>
            <person name="Iijima Y."/>
            <person name="Najima M."/>
            <person name="Nakano M."/>
            <person name="Yamashita A."/>
            <person name="Kubota Y."/>
            <person name="Kimura S."/>
            <person name="Yasunaga T."/>
            <person name="Honda T."/>
            <person name="Shinagawa H."/>
            <person name="Hattori M."/>
            <person name="Iida T."/>
        </authorList>
    </citation>
    <scope>NUCLEOTIDE SEQUENCE [LARGE SCALE GENOMIC DNA]</scope>
    <source>
        <strain>RIMD 2210633</strain>
    </source>
</reference>
<name>PYRG_VIBPA</name>
<feature type="chain" id="PRO_0000138247" description="CTP synthase">
    <location>
        <begin position="1"/>
        <end position="546"/>
    </location>
</feature>
<feature type="domain" description="Glutamine amidotransferase type-1" evidence="1">
    <location>
        <begin position="291"/>
        <end position="542"/>
    </location>
</feature>
<feature type="region of interest" description="Amidoligase domain" evidence="1">
    <location>
        <begin position="1"/>
        <end position="266"/>
    </location>
</feature>
<feature type="active site" description="Nucleophile; for glutamine hydrolysis" evidence="1">
    <location>
        <position position="379"/>
    </location>
</feature>
<feature type="active site" evidence="1">
    <location>
        <position position="515"/>
    </location>
</feature>
<feature type="active site" evidence="1">
    <location>
        <position position="517"/>
    </location>
</feature>
<feature type="binding site" evidence="1">
    <location>
        <position position="14"/>
    </location>
    <ligand>
        <name>CTP</name>
        <dbReference type="ChEBI" id="CHEBI:37563"/>
        <note>allosteric inhibitor</note>
    </ligand>
</feature>
<feature type="binding site" evidence="1">
    <location>
        <position position="14"/>
    </location>
    <ligand>
        <name>UTP</name>
        <dbReference type="ChEBI" id="CHEBI:46398"/>
    </ligand>
</feature>
<feature type="binding site" evidence="1">
    <location>
        <begin position="15"/>
        <end position="20"/>
    </location>
    <ligand>
        <name>ATP</name>
        <dbReference type="ChEBI" id="CHEBI:30616"/>
    </ligand>
</feature>
<feature type="binding site" evidence="1">
    <location>
        <position position="72"/>
    </location>
    <ligand>
        <name>ATP</name>
        <dbReference type="ChEBI" id="CHEBI:30616"/>
    </ligand>
</feature>
<feature type="binding site" evidence="1">
    <location>
        <position position="72"/>
    </location>
    <ligand>
        <name>Mg(2+)</name>
        <dbReference type="ChEBI" id="CHEBI:18420"/>
    </ligand>
</feature>
<feature type="binding site" evidence="1">
    <location>
        <position position="140"/>
    </location>
    <ligand>
        <name>Mg(2+)</name>
        <dbReference type="ChEBI" id="CHEBI:18420"/>
    </ligand>
</feature>
<feature type="binding site" evidence="1">
    <location>
        <begin position="147"/>
        <end position="149"/>
    </location>
    <ligand>
        <name>CTP</name>
        <dbReference type="ChEBI" id="CHEBI:37563"/>
        <note>allosteric inhibitor</note>
    </ligand>
</feature>
<feature type="binding site" evidence="1">
    <location>
        <begin position="187"/>
        <end position="192"/>
    </location>
    <ligand>
        <name>CTP</name>
        <dbReference type="ChEBI" id="CHEBI:37563"/>
        <note>allosteric inhibitor</note>
    </ligand>
</feature>
<feature type="binding site" evidence="1">
    <location>
        <begin position="187"/>
        <end position="192"/>
    </location>
    <ligand>
        <name>UTP</name>
        <dbReference type="ChEBI" id="CHEBI:46398"/>
    </ligand>
</feature>
<feature type="binding site" evidence="1">
    <location>
        <position position="223"/>
    </location>
    <ligand>
        <name>CTP</name>
        <dbReference type="ChEBI" id="CHEBI:37563"/>
        <note>allosteric inhibitor</note>
    </ligand>
</feature>
<feature type="binding site" evidence="1">
    <location>
        <position position="223"/>
    </location>
    <ligand>
        <name>UTP</name>
        <dbReference type="ChEBI" id="CHEBI:46398"/>
    </ligand>
</feature>
<feature type="binding site" evidence="1">
    <location>
        <begin position="239"/>
        <end position="241"/>
    </location>
    <ligand>
        <name>ATP</name>
        <dbReference type="ChEBI" id="CHEBI:30616"/>
    </ligand>
</feature>
<feature type="binding site" evidence="1">
    <location>
        <position position="352"/>
    </location>
    <ligand>
        <name>L-glutamine</name>
        <dbReference type="ChEBI" id="CHEBI:58359"/>
    </ligand>
</feature>
<feature type="binding site" evidence="1">
    <location>
        <begin position="380"/>
        <end position="383"/>
    </location>
    <ligand>
        <name>L-glutamine</name>
        <dbReference type="ChEBI" id="CHEBI:58359"/>
    </ligand>
</feature>
<feature type="binding site" evidence="1">
    <location>
        <position position="403"/>
    </location>
    <ligand>
        <name>L-glutamine</name>
        <dbReference type="ChEBI" id="CHEBI:58359"/>
    </ligand>
</feature>
<feature type="binding site" evidence="1">
    <location>
        <position position="470"/>
    </location>
    <ligand>
        <name>L-glutamine</name>
        <dbReference type="ChEBI" id="CHEBI:58359"/>
    </ligand>
</feature>
<protein>
    <recommendedName>
        <fullName evidence="1">CTP synthase</fullName>
        <ecNumber evidence="1">6.3.4.2</ecNumber>
    </recommendedName>
    <alternativeName>
        <fullName evidence="1">Cytidine 5'-triphosphate synthase</fullName>
    </alternativeName>
    <alternativeName>
        <fullName evidence="1">Cytidine triphosphate synthetase</fullName>
        <shortName evidence="1">CTP synthetase</shortName>
        <shortName evidence="1">CTPS</shortName>
    </alternativeName>
    <alternativeName>
        <fullName evidence="1">UTP--ammonia ligase</fullName>
    </alternativeName>
</protein>
<evidence type="ECO:0000255" key="1">
    <source>
        <dbReference type="HAMAP-Rule" id="MF_01227"/>
    </source>
</evidence>
<proteinExistence type="inferred from homology"/>
<dbReference type="EC" id="6.3.4.2" evidence="1"/>
<dbReference type="EMBL" id="BA000031">
    <property type="protein sequence ID" value="BAC60825.1"/>
    <property type="molecule type" value="Genomic_DNA"/>
</dbReference>
<dbReference type="RefSeq" id="NP_798941.1">
    <property type="nucleotide sequence ID" value="NC_004603.1"/>
</dbReference>
<dbReference type="RefSeq" id="WP_005455581.1">
    <property type="nucleotide sequence ID" value="NC_004603.1"/>
</dbReference>
<dbReference type="SMR" id="Q87LP9"/>
<dbReference type="GeneID" id="1190086"/>
<dbReference type="KEGG" id="vpa:VP2562"/>
<dbReference type="PATRIC" id="fig|223926.6.peg.2461"/>
<dbReference type="eggNOG" id="COG0504">
    <property type="taxonomic scope" value="Bacteria"/>
</dbReference>
<dbReference type="HOGENOM" id="CLU_011675_5_0_6"/>
<dbReference type="UniPathway" id="UPA00159">
    <property type="reaction ID" value="UER00277"/>
</dbReference>
<dbReference type="Proteomes" id="UP000002493">
    <property type="component" value="Chromosome 1"/>
</dbReference>
<dbReference type="GO" id="GO:0005829">
    <property type="term" value="C:cytosol"/>
    <property type="evidence" value="ECO:0007669"/>
    <property type="project" value="TreeGrafter"/>
</dbReference>
<dbReference type="GO" id="GO:0005524">
    <property type="term" value="F:ATP binding"/>
    <property type="evidence" value="ECO:0007669"/>
    <property type="project" value="UniProtKB-KW"/>
</dbReference>
<dbReference type="GO" id="GO:0003883">
    <property type="term" value="F:CTP synthase activity"/>
    <property type="evidence" value="ECO:0007669"/>
    <property type="project" value="UniProtKB-UniRule"/>
</dbReference>
<dbReference type="GO" id="GO:0004359">
    <property type="term" value="F:glutaminase activity"/>
    <property type="evidence" value="ECO:0007669"/>
    <property type="project" value="RHEA"/>
</dbReference>
<dbReference type="GO" id="GO:0042802">
    <property type="term" value="F:identical protein binding"/>
    <property type="evidence" value="ECO:0007669"/>
    <property type="project" value="TreeGrafter"/>
</dbReference>
<dbReference type="GO" id="GO:0046872">
    <property type="term" value="F:metal ion binding"/>
    <property type="evidence" value="ECO:0007669"/>
    <property type="project" value="UniProtKB-KW"/>
</dbReference>
<dbReference type="GO" id="GO:0044210">
    <property type="term" value="P:'de novo' CTP biosynthetic process"/>
    <property type="evidence" value="ECO:0007669"/>
    <property type="project" value="UniProtKB-UniRule"/>
</dbReference>
<dbReference type="GO" id="GO:0019856">
    <property type="term" value="P:pyrimidine nucleobase biosynthetic process"/>
    <property type="evidence" value="ECO:0007669"/>
    <property type="project" value="TreeGrafter"/>
</dbReference>
<dbReference type="CDD" id="cd03113">
    <property type="entry name" value="CTPS_N"/>
    <property type="match status" value="1"/>
</dbReference>
<dbReference type="CDD" id="cd01746">
    <property type="entry name" value="GATase1_CTP_Synthase"/>
    <property type="match status" value="1"/>
</dbReference>
<dbReference type="FunFam" id="3.40.50.300:FF:000009">
    <property type="entry name" value="CTP synthase"/>
    <property type="match status" value="1"/>
</dbReference>
<dbReference type="FunFam" id="3.40.50.880:FF:000002">
    <property type="entry name" value="CTP synthase"/>
    <property type="match status" value="1"/>
</dbReference>
<dbReference type="Gene3D" id="3.40.50.880">
    <property type="match status" value="1"/>
</dbReference>
<dbReference type="Gene3D" id="3.40.50.300">
    <property type="entry name" value="P-loop containing nucleotide triphosphate hydrolases"/>
    <property type="match status" value="1"/>
</dbReference>
<dbReference type="HAMAP" id="MF_01227">
    <property type="entry name" value="PyrG"/>
    <property type="match status" value="1"/>
</dbReference>
<dbReference type="InterPro" id="IPR029062">
    <property type="entry name" value="Class_I_gatase-like"/>
</dbReference>
<dbReference type="InterPro" id="IPR004468">
    <property type="entry name" value="CTP_synthase"/>
</dbReference>
<dbReference type="InterPro" id="IPR017456">
    <property type="entry name" value="CTP_synthase_N"/>
</dbReference>
<dbReference type="InterPro" id="IPR017926">
    <property type="entry name" value="GATASE"/>
</dbReference>
<dbReference type="InterPro" id="IPR033828">
    <property type="entry name" value="GATase1_CTP_Synthase"/>
</dbReference>
<dbReference type="InterPro" id="IPR027417">
    <property type="entry name" value="P-loop_NTPase"/>
</dbReference>
<dbReference type="NCBIfam" id="NF003792">
    <property type="entry name" value="PRK05380.1"/>
    <property type="match status" value="1"/>
</dbReference>
<dbReference type="NCBIfam" id="TIGR00337">
    <property type="entry name" value="PyrG"/>
    <property type="match status" value="1"/>
</dbReference>
<dbReference type="PANTHER" id="PTHR11550">
    <property type="entry name" value="CTP SYNTHASE"/>
    <property type="match status" value="1"/>
</dbReference>
<dbReference type="PANTHER" id="PTHR11550:SF0">
    <property type="entry name" value="CTP SYNTHASE-RELATED"/>
    <property type="match status" value="1"/>
</dbReference>
<dbReference type="Pfam" id="PF06418">
    <property type="entry name" value="CTP_synth_N"/>
    <property type="match status" value="1"/>
</dbReference>
<dbReference type="Pfam" id="PF00117">
    <property type="entry name" value="GATase"/>
    <property type="match status" value="1"/>
</dbReference>
<dbReference type="SUPFAM" id="SSF52317">
    <property type="entry name" value="Class I glutamine amidotransferase-like"/>
    <property type="match status" value="1"/>
</dbReference>
<dbReference type="SUPFAM" id="SSF52540">
    <property type="entry name" value="P-loop containing nucleoside triphosphate hydrolases"/>
    <property type="match status" value="1"/>
</dbReference>
<dbReference type="PROSITE" id="PS51273">
    <property type="entry name" value="GATASE_TYPE_1"/>
    <property type="match status" value="1"/>
</dbReference>
<organism>
    <name type="scientific">Vibrio parahaemolyticus serotype O3:K6 (strain RIMD 2210633)</name>
    <dbReference type="NCBI Taxonomy" id="223926"/>
    <lineage>
        <taxon>Bacteria</taxon>
        <taxon>Pseudomonadati</taxon>
        <taxon>Pseudomonadota</taxon>
        <taxon>Gammaproteobacteria</taxon>
        <taxon>Vibrionales</taxon>
        <taxon>Vibrionaceae</taxon>
        <taxon>Vibrio</taxon>
    </lineage>
</organism>
<sequence>MTTNYIFVTGGVVSSLGKGIAAASLAAILEARGLKVTMMKLDPYINVDPGTMSPTQHGEVFVTEDGAETDLDLGHYERFIRTKMTKRNNFTAGRVYADVLRKERRGDYLGATIQVIPHITNAIKDRVIAGSEGHDIAIVEVGGTVGDIESLPFMEAIRQLAVELGRERAMFMHLTLVPYLAAAGEVKTKPTQHSVKELLSIGIQPDILVCRSDRMIPANERKKIALFCNVPEKAVISMKDVDSIYKIPQLVKSQGLDDLVCTRFGIDAPEADLSEWEQVIYEEANPTGEVTIGMVGKYIELPDAYKSVNEALKHAGLKNRLNVTIKYVDSQDIETKGVELLEGLDAILVPGGFGDRGVEGKIRAAQYARENKVPYLGICLGMQVALIEYARNVAGMEGAHSTEFNKDTKYPVVGLITEWVDETGNVEERTESSDLGGTMRLGSQLCHLEKGTKARELYGSATIHERHRHRYEVNNVLRPQIEKAGLKVSGLSADKKLVEMIENPAHPWFVAAQFHPEFTSTPRDGHPLFAGFVKAAGQYSRGEFEK</sequence>
<keyword id="KW-0067">ATP-binding</keyword>
<keyword id="KW-0315">Glutamine amidotransferase</keyword>
<keyword id="KW-0436">Ligase</keyword>
<keyword id="KW-0460">Magnesium</keyword>
<keyword id="KW-0479">Metal-binding</keyword>
<keyword id="KW-0547">Nucleotide-binding</keyword>
<keyword id="KW-0665">Pyrimidine biosynthesis</keyword>
<comment type="function">
    <text evidence="1">Catalyzes the ATP-dependent amination of UTP to CTP with either L-glutamine or ammonia as the source of nitrogen. Regulates intracellular CTP levels through interactions with the four ribonucleotide triphosphates.</text>
</comment>
<comment type="catalytic activity">
    <reaction evidence="1">
        <text>UTP + L-glutamine + ATP + H2O = CTP + L-glutamate + ADP + phosphate + 2 H(+)</text>
        <dbReference type="Rhea" id="RHEA:26426"/>
        <dbReference type="ChEBI" id="CHEBI:15377"/>
        <dbReference type="ChEBI" id="CHEBI:15378"/>
        <dbReference type="ChEBI" id="CHEBI:29985"/>
        <dbReference type="ChEBI" id="CHEBI:30616"/>
        <dbReference type="ChEBI" id="CHEBI:37563"/>
        <dbReference type="ChEBI" id="CHEBI:43474"/>
        <dbReference type="ChEBI" id="CHEBI:46398"/>
        <dbReference type="ChEBI" id="CHEBI:58359"/>
        <dbReference type="ChEBI" id="CHEBI:456216"/>
        <dbReference type="EC" id="6.3.4.2"/>
    </reaction>
</comment>
<comment type="catalytic activity">
    <reaction evidence="1">
        <text>L-glutamine + H2O = L-glutamate + NH4(+)</text>
        <dbReference type="Rhea" id="RHEA:15889"/>
        <dbReference type="ChEBI" id="CHEBI:15377"/>
        <dbReference type="ChEBI" id="CHEBI:28938"/>
        <dbReference type="ChEBI" id="CHEBI:29985"/>
        <dbReference type="ChEBI" id="CHEBI:58359"/>
    </reaction>
</comment>
<comment type="catalytic activity">
    <reaction evidence="1">
        <text>UTP + NH4(+) + ATP = CTP + ADP + phosphate + 2 H(+)</text>
        <dbReference type="Rhea" id="RHEA:16597"/>
        <dbReference type="ChEBI" id="CHEBI:15378"/>
        <dbReference type="ChEBI" id="CHEBI:28938"/>
        <dbReference type="ChEBI" id="CHEBI:30616"/>
        <dbReference type="ChEBI" id="CHEBI:37563"/>
        <dbReference type="ChEBI" id="CHEBI:43474"/>
        <dbReference type="ChEBI" id="CHEBI:46398"/>
        <dbReference type="ChEBI" id="CHEBI:456216"/>
    </reaction>
</comment>
<comment type="activity regulation">
    <text evidence="1">Allosterically activated by GTP, when glutamine is the substrate; GTP has no effect on the reaction when ammonia is the substrate. The allosteric effector GTP functions by stabilizing the protein conformation that binds the tetrahedral intermediate(s) formed during glutamine hydrolysis. Inhibited by the product CTP, via allosteric rather than competitive inhibition.</text>
</comment>
<comment type="pathway">
    <text evidence="1">Pyrimidine metabolism; CTP biosynthesis via de novo pathway; CTP from UDP: step 2/2.</text>
</comment>
<comment type="subunit">
    <text evidence="1">Homotetramer.</text>
</comment>
<comment type="miscellaneous">
    <text evidence="1">CTPSs have evolved a hybrid strategy for distinguishing between UTP and CTP. The overlapping regions of the product feedback inhibitory and substrate sites recognize a common feature in both compounds, the triphosphate moiety. To differentiate isosteric substrate and product pyrimidine rings, an additional pocket far from the expected kinase/ligase catalytic site, specifically recognizes the cytosine and ribose portions of the product inhibitor.</text>
</comment>
<comment type="similarity">
    <text evidence="1">Belongs to the CTP synthase family.</text>
</comment>
<gene>
    <name evidence="1" type="primary">pyrG</name>
    <name type="ordered locus">VP2562</name>
</gene>
<accession>Q87LP9</accession>